<gene>
    <name type="primary">ZP3</name>
    <name type="synonym">ZPC</name>
</gene>
<comment type="function">
    <text>Component of the zona pellucida, an extracellular matrix surrounding oocytes which mediates sperm binding, induction of the acrosome reaction and prevents post-fertilization polyspermy. The zona pellucida is composed of 3 to 4 glycoproteins, ZP1, ZP2, ZP3, and ZP4. ZP3 is essential for sperm binding and zona matrix formation.</text>
</comment>
<comment type="subunit">
    <text evidence="2 3">Polymers of ZP2 and ZP3 organized into long filaments cross-linked by ZP1 homodimers. Interacts with ZP1 and ZP2.</text>
</comment>
<comment type="subcellular location">
    <molecule>Processed zona pellucida sperm-binding protein 3</molecule>
    <subcellularLocation>
        <location evidence="3">Zona pellucida</location>
    </subcellularLocation>
</comment>
<comment type="subcellular location">
    <subcellularLocation>
        <location evidence="4">Cell membrane</location>
        <topology evidence="5">Single-pass type I membrane protein</topology>
    </subcellularLocation>
</comment>
<comment type="tissue specificity">
    <text>Expressed in oocytes.</text>
</comment>
<comment type="domain">
    <text>The ZP domain is involved in the polymerization of the ZP proteins to form the zona pellucida.</text>
</comment>
<comment type="PTM">
    <text>Proteolytically cleaved before the transmembrane segment to yield the secreted ectodomain incorporated in the zona pellucida.</text>
</comment>
<comment type="PTM">
    <text evidence="1">N-glycosylated.</text>
</comment>
<comment type="PTM">
    <text evidence="1">O-glycosylated; removal of O-linked glycans may play an important role in the post-fertilization block to polyspermy.</text>
</comment>
<comment type="similarity">
    <text evidence="7">Belongs to the ZP domain family. ZPC subfamily.</text>
</comment>
<comment type="online information" name="Protein Spotlight">
    <link uri="https://www.proteinspotlight.org/back_issues/093"/>
    <text>Molecular chastity - Issue 93 of April 2008</text>
</comment>
<accession>P48831</accession>
<organism>
    <name type="scientific">Canis lupus familiaris</name>
    <name type="common">Dog</name>
    <name type="synonym">Canis familiaris</name>
    <dbReference type="NCBI Taxonomy" id="9615"/>
    <lineage>
        <taxon>Eukaryota</taxon>
        <taxon>Metazoa</taxon>
        <taxon>Chordata</taxon>
        <taxon>Craniata</taxon>
        <taxon>Vertebrata</taxon>
        <taxon>Euteleostomi</taxon>
        <taxon>Mammalia</taxon>
        <taxon>Eutheria</taxon>
        <taxon>Laurasiatheria</taxon>
        <taxon>Carnivora</taxon>
        <taxon>Caniformia</taxon>
        <taxon>Canidae</taxon>
        <taxon>Canis</taxon>
    </lineage>
</organism>
<sequence length="426" mass="47368">MGLSYGIFICFLLLGGMELCCPQTIWPTETYYPLTSRPPVMVDCLESQLVVTVSKDLFGTGKLIRPADLTLGPENCEPLVSMDTDDVVRFEVGLHECGSRVQVTDNALVYSTFLIHSPRPAGNLSILRTNRAEVPIECHYPRHSNVSSQAILPTWVPFRTTMLFEEKLVFSLRLMEEDWGSEKQSPTFQLGDIAHLQAEVHTGSHMPLRLFVDHCVATLTPDRNAFLHHKIVDFHGCLVDGLYNSSSAFKAPRPRPETLQFTVDVFHFAKDSRNTIYITCHLKVTPADRVPDQLNKACSFIKSTKRWYPVEGSADICRCCNKGSCGLPGRSRRLSHLERGWRKSVSHTRNRRHVTEEAEITVGPLIFLGKASDHGIEGSTSPHTSVMLGLGLATVVSLTLATIVLVLAKRHRTASHPVICPASVSQ</sequence>
<keyword id="KW-1003">Cell membrane</keyword>
<keyword id="KW-0165">Cleavage on pair of basic residues</keyword>
<keyword id="KW-1015">Disulfide bond</keyword>
<keyword id="KW-0272">Extracellular matrix</keyword>
<keyword id="KW-0278">Fertilization</keyword>
<keyword id="KW-0325">Glycoprotein</keyword>
<keyword id="KW-0472">Membrane</keyword>
<keyword id="KW-0873">Pyrrolidone carboxylic acid</keyword>
<keyword id="KW-0675">Receptor</keyword>
<keyword id="KW-1185">Reference proteome</keyword>
<keyword id="KW-0964">Secreted</keyword>
<keyword id="KW-0732">Signal</keyword>
<keyword id="KW-0812">Transmembrane</keyword>
<keyword id="KW-1133">Transmembrane helix</keyword>
<feature type="signal peptide" evidence="1">
    <location>
        <begin position="1"/>
        <end position="22"/>
    </location>
</feature>
<feature type="chain" id="PRO_0000041705" description="Zona pellucida sperm-binding protein 3">
    <location>
        <begin position="23"/>
        <end position="350"/>
    </location>
</feature>
<feature type="chain" id="PRO_0000304567" description="Processed zona pellucida sperm-binding protein 3">
    <location>
        <begin position="23"/>
        <end status="unknown"/>
    </location>
</feature>
<feature type="propeptide" id="PRO_0000041706" description="Removed in mature form" evidence="1">
    <location>
        <begin position="351"/>
        <end position="426"/>
    </location>
</feature>
<feature type="topological domain" description="Extracellular" evidence="5">
    <location>
        <begin position="23"/>
        <end position="385"/>
    </location>
</feature>
<feature type="transmembrane region" description="Helical" evidence="5">
    <location>
        <begin position="386"/>
        <end position="406"/>
    </location>
</feature>
<feature type="topological domain" description="Cytoplasmic" evidence="5">
    <location>
        <begin position="407"/>
        <end position="426"/>
    </location>
</feature>
<feature type="domain" description="ZP" evidence="6">
    <location>
        <begin position="43"/>
        <end position="305"/>
    </location>
</feature>
<feature type="modified residue" description="Pyrrolidone carboxylic acid" evidence="3">
    <location>
        <position position="23"/>
    </location>
</feature>
<feature type="glycosylation site" description="N-linked (GlcNAc...) asparagine" evidence="1">
    <location>
        <position position="123"/>
    </location>
</feature>
<feature type="glycosylation site" description="N-linked (GlcNAc...) asparagine" evidence="1">
    <location>
        <position position="145"/>
    </location>
</feature>
<feature type="glycosylation site" description="O-linked (GalNAc...) threonine" evidence="1">
    <location>
        <position position="154"/>
    </location>
</feature>
<feature type="glycosylation site" description="O-linked (GalNAc...) threonine" evidence="1">
    <location>
        <position position="160"/>
    </location>
</feature>
<feature type="glycosylation site" description="O-linked (GalNAc...) threonine" evidence="1">
    <location>
        <position position="161"/>
    </location>
</feature>
<feature type="glycosylation site" description="N-linked (GlcNAc...) asparagine" evidence="5">
    <location>
        <position position="244"/>
    </location>
</feature>
<feature type="disulfide bond" evidence="1">
    <location>
        <begin position="44"/>
        <end position="138"/>
    </location>
</feature>
<feature type="disulfide bond" evidence="1">
    <location>
        <begin position="76"/>
        <end position="97"/>
    </location>
</feature>
<feature type="disulfide bond" evidence="1">
    <location>
        <begin position="215"/>
        <end position="280"/>
    </location>
</feature>
<feature type="disulfide bond" evidence="1">
    <location>
        <begin position="237"/>
        <end position="298"/>
    </location>
</feature>
<feature type="sequence conflict" description="In Ref. 2; BAA08098." evidence="7" ref="2">
    <original>L</original>
    <variation>P</variation>
    <location>
        <position position="227"/>
    </location>
</feature>
<feature type="sequence conflict" description="In Ref. 2; BAA08098." evidence="7" ref="2">
    <original>W</original>
    <variation>S</variation>
    <location>
        <position position="307"/>
    </location>
</feature>
<feature type="sequence conflict" description="In Ref. 2; BAA08098." evidence="7" ref="2">
    <original>K</original>
    <variation>R</variation>
    <location>
        <position position="343"/>
    </location>
</feature>
<protein>
    <recommendedName>
        <fullName>Zona pellucida sperm-binding protein 3</fullName>
    </recommendedName>
    <alternativeName>
        <fullName>Sperm receptor</fullName>
    </alternativeName>
    <alternativeName>
        <fullName>Zona pellucida glycoprotein 3</fullName>
        <shortName>Zp-3</shortName>
    </alternativeName>
    <alternativeName>
        <fullName>Zona pellucida protein C</fullName>
    </alternativeName>
    <component>
        <recommendedName>
            <fullName>Processed zona pellucida sperm-binding protein 3</fullName>
        </recommendedName>
    </component>
</protein>
<proteinExistence type="evidence at transcript level"/>
<name>ZP3_CANLF</name>
<evidence type="ECO:0000250" key="1"/>
<evidence type="ECO:0000250" key="2">
    <source>
        <dbReference type="UniProtKB" id="P20239"/>
    </source>
</evidence>
<evidence type="ECO:0000250" key="3">
    <source>
        <dbReference type="UniProtKB" id="P21754"/>
    </source>
</evidence>
<evidence type="ECO:0000250" key="4">
    <source>
        <dbReference type="UniProtKB" id="P48833"/>
    </source>
</evidence>
<evidence type="ECO:0000255" key="5"/>
<evidence type="ECO:0000255" key="6">
    <source>
        <dbReference type="PROSITE-ProRule" id="PRU00375"/>
    </source>
</evidence>
<evidence type="ECO:0000305" key="7"/>
<dbReference type="EMBL" id="U05780">
    <property type="protein sequence ID" value="AAA74387.1"/>
    <property type="molecule type" value="mRNA"/>
</dbReference>
<dbReference type="EMBL" id="D45070">
    <property type="protein sequence ID" value="BAA08098.1"/>
    <property type="molecule type" value="mRNA"/>
</dbReference>
<dbReference type="PIR" id="S70396">
    <property type="entry name" value="S70396"/>
</dbReference>
<dbReference type="RefSeq" id="NP_001003224.1">
    <property type="nucleotide sequence ID" value="NM_001003224.1"/>
</dbReference>
<dbReference type="SMR" id="P48831"/>
<dbReference type="FunCoup" id="P48831">
    <property type="interactions" value="136"/>
</dbReference>
<dbReference type="STRING" id="9615.ENSCAFP00000020101"/>
<dbReference type="GlyCosmos" id="P48831">
    <property type="glycosylation" value="6 sites, No reported glycans"/>
</dbReference>
<dbReference type="PaxDb" id="9612-ENSCAFP00000020101"/>
<dbReference type="GeneID" id="403894"/>
<dbReference type="KEGG" id="cfa:403894"/>
<dbReference type="CTD" id="7784"/>
<dbReference type="eggNOG" id="ENOG502QSZF">
    <property type="taxonomic scope" value="Eukaryota"/>
</dbReference>
<dbReference type="InParanoid" id="P48831"/>
<dbReference type="OrthoDB" id="8880842at2759"/>
<dbReference type="Proteomes" id="UP000002254">
    <property type="component" value="Unplaced"/>
</dbReference>
<dbReference type="Proteomes" id="UP000694429">
    <property type="component" value="Unplaced"/>
</dbReference>
<dbReference type="Proteomes" id="UP000694542">
    <property type="component" value="Unplaced"/>
</dbReference>
<dbReference type="Proteomes" id="UP000805418">
    <property type="component" value="Unplaced"/>
</dbReference>
<dbReference type="GO" id="GO:0062023">
    <property type="term" value="C:collagen-containing extracellular matrix"/>
    <property type="evidence" value="ECO:0000250"/>
    <property type="project" value="UniProtKB"/>
</dbReference>
<dbReference type="GO" id="GO:0035805">
    <property type="term" value="C:egg coat"/>
    <property type="evidence" value="ECO:0000250"/>
    <property type="project" value="UniProtKB"/>
</dbReference>
<dbReference type="GO" id="GO:0031012">
    <property type="term" value="C:extracellular matrix"/>
    <property type="evidence" value="ECO:0000318"/>
    <property type="project" value="GO_Central"/>
</dbReference>
<dbReference type="GO" id="GO:0005615">
    <property type="term" value="C:extracellular space"/>
    <property type="evidence" value="ECO:0000250"/>
    <property type="project" value="UniProtKB"/>
</dbReference>
<dbReference type="GO" id="GO:0005886">
    <property type="term" value="C:plasma membrane"/>
    <property type="evidence" value="ECO:0000250"/>
    <property type="project" value="UniProtKB"/>
</dbReference>
<dbReference type="GO" id="GO:0032190">
    <property type="term" value="F:acrosin binding"/>
    <property type="evidence" value="ECO:0000318"/>
    <property type="project" value="GO_Central"/>
</dbReference>
<dbReference type="GO" id="GO:0030246">
    <property type="term" value="F:carbohydrate binding"/>
    <property type="evidence" value="ECO:0000250"/>
    <property type="project" value="UniProtKB"/>
</dbReference>
<dbReference type="GO" id="GO:0048018">
    <property type="term" value="F:receptor ligand activity"/>
    <property type="evidence" value="ECO:0000250"/>
    <property type="project" value="UniProtKB"/>
</dbReference>
<dbReference type="GO" id="GO:0035804">
    <property type="term" value="F:structural constituent of egg coat"/>
    <property type="evidence" value="ECO:0000250"/>
    <property type="project" value="UniProtKB"/>
</dbReference>
<dbReference type="GO" id="GO:0007339">
    <property type="term" value="P:binding of sperm to zona pellucida"/>
    <property type="evidence" value="ECO:0000315"/>
    <property type="project" value="UniProtKB"/>
</dbReference>
<dbReference type="GO" id="GO:0001825">
    <property type="term" value="P:blastocyst formation"/>
    <property type="evidence" value="ECO:0000250"/>
    <property type="project" value="UniProtKB"/>
</dbReference>
<dbReference type="GO" id="GO:0035803">
    <property type="term" value="P:egg coat formation"/>
    <property type="evidence" value="ECO:0000250"/>
    <property type="project" value="UniProtKB"/>
</dbReference>
<dbReference type="GO" id="GO:0002455">
    <property type="term" value="P:humoral immune response mediated by circulating immunoglobulin"/>
    <property type="evidence" value="ECO:0000314"/>
    <property type="project" value="UniProtKB"/>
</dbReference>
<dbReference type="GO" id="GO:0045892">
    <property type="term" value="P:negative regulation of DNA-templated transcription"/>
    <property type="evidence" value="ECO:0000250"/>
    <property type="project" value="UniProtKB"/>
</dbReference>
<dbReference type="GO" id="GO:0048599">
    <property type="term" value="P:oocyte development"/>
    <property type="evidence" value="ECO:0000250"/>
    <property type="project" value="UniProtKB"/>
</dbReference>
<dbReference type="GO" id="GO:2000368">
    <property type="term" value="P:positive regulation of acrosomal vesicle exocytosis"/>
    <property type="evidence" value="ECO:0000250"/>
    <property type="project" value="UniProtKB"/>
</dbReference>
<dbReference type="GO" id="GO:2000344">
    <property type="term" value="P:positive regulation of acrosome reaction"/>
    <property type="evidence" value="ECO:0000250"/>
    <property type="project" value="UniProtKB"/>
</dbReference>
<dbReference type="GO" id="GO:2000388">
    <property type="term" value="P:positive regulation of antral ovarian follicle growth"/>
    <property type="evidence" value="ECO:0000250"/>
    <property type="project" value="UniProtKB"/>
</dbReference>
<dbReference type="GO" id="GO:0045893">
    <property type="term" value="P:positive regulation of DNA-templated transcription"/>
    <property type="evidence" value="ECO:0000250"/>
    <property type="project" value="UniProtKB"/>
</dbReference>
<dbReference type="GO" id="GO:0002922">
    <property type="term" value="P:positive regulation of humoral immune response"/>
    <property type="evidence" value="ECO:0000250"/>
    <property type="project" value="UniProtKB"/>
</dbReference>
<dbReference type="GO" id="GO:0050729">
    <property type="term" value="P:positive regulation of inflammatory response"/>
    <property type="evidence" value="ECO:0000250"/>
    <property type="project" value="UniProtKB"/>
</dbReference>
<dbReference type="GO" id="GO:0032753">
    <property type="term" value="P:positive regulation of interleukin-4 production"/>
    <property type="evidence" value="ECO:0000250"/>
    <property type="project" value="UniProtKB"/>
</dbReference>
<dbReference type="GO" id="GO:0002687">
    <property type="term" value="P:positive regulation of leukocyte migration"/>
    <property type="evidence" value="ECO:0000250"/>
    <property type="project" value="UniProtKB"/>
</dbReference>
<dbReference type="GO" id="GO:2000386">
    <property type="term" value="P:positive regulation of ovarian follicle development"/>
    <property type="evidence" value="ECO:0000315"/>
    <property type="project" value="UniProtKB"/>
</dbReference>
<dbReference type="GO" id="GO:0042102">
    <property type="term" value="P:positive regulation of T cell proliferation"/>
    <property type="evidence" value="ECO:0000250"/>
    <property type="project" value="UniProtKB"/>
</dbReference>
<dbReference type="GO" id="GO:0032729">
    <property type="term" value="P:positive regulation of type II interferon production"/>
    <property type="evidence" value="ECO:0000250"/>
    <property type="project" value="UniProtKB"/>
</dbReference>
<dbReference type="GO" id="GO:0001809">
    <property type="term" value="P:positive regulation of type IV hypersensitivity"/>
    <property type="evidence" value="ECO:0000250"/>
    <property type="project" value="UniProtKB"/>
</dbReference>
<dbReference type="FunFam" id="2.60.40.3210:FF:000001">
    <property type="entry name" value="Zona pellucida sperm-binding protein 3"/>
    <property type="match status" value="1"/>
</dbReference>
<dbReference type="FunFam" id="2.60.40.4100:FF:000002">
    <property type="entry name" value="Zona pellucida sperm-binding protein 3"/>
    <property type="match status" value="1"/>
</dbReference>
<dbReference type="Gene3D" id="2.60.40.4100">
    <property type="entry name" value="Zona pellucida, ZP-C domain"/>
    <property type="match status" value="1"/>
</dbReference>
<dbReference type="Gene3D" id="2.60.40.3210">
    <property type="entry name" value="Zona pellucida, ZP-N domain"/>
    <property type="match status" value="1"/>
</dbReference>
<dbReference type="InterPro" id="IPR055355">
    <property type="entry name" value="ZP-C"/>
</dbReference>
<dbReference type="InterPro" id="IPR042235">
    <property type="entry name" value="ZP-C_dom"/>
</dbReference>
<dbReference type="InterPro" id="IPR055356">
    <property type="entry name" value="ZP-N"/>
</dbReference>
<dbReference type="InterPro" id="IPR048290">
    <property type="entry name" value="ZP_chr"/>
</dbReference>
<dbReference type="InterPro" id="IPR001507">
    <property type="entry name" value="ZP_dom"/>
</dbReference>
<dbReference type="InterPro" id="IPR017977">
    <property type="entry name" value="ZP_dom_CS"/>
</dbReference>
<dbReference type="PANTHER" id="PTHR11576">
    <property type="entry name" value="ZONA PELLUCIDA SPERM-BINDING PROTEIN 3"/>
    <property type="match status" value="1"/>
</dbReference>
<dbReference type="PANTHER" id="PTHR11576:SF2">
    <property type="entry name" value="ZONA PELLUCIDA SPERM-BINDING PROTEIN 3"/>
    <property type="match status" value="1"/>
</dbReference>
<dbReference type="Pfam" id="PF00100">
    <property type="entry name" value="Zona_pellucida"/>
    <property type="match status" value="1"/>
</dbReference>
<dbReference type="Pfam" id="PF23344">
    <property type="entry name" value="ZP-N"/>
    <property type="match status" value="1"/>
</dbReference>
<dbReference type="PRINTS" id="PR00023">
    <property type="entry name" value="ZPELLUCIDA"/>
</dbReference>
<dbReference type="SMART" id="SM00241">
    <property type="entry name" value="ZP"/>
    <property type="match status" value="1"/>
</dbReference>
<dbReference type="PROSITE" id="PS00682">
    <property type="entry name" value="ZP_1"/>
    <property type="match status" value="1"/>
</dbReference>
<dbReference type="PROSITE" id="PS51034">
    <property type="entry name" value="ZP_2"/>
    <property type="match status" value="1"/>
</dbReference>
<reference key="1">
    <citation type="journal article" date="1994" name="DNA Seq.">
        <title>Cloning and characterization of zona pellucida genes and cDNAs from a variety of mammalian species: the ZPA, ZPB and ZPC gene families.</title>
        <authorList>
            <person name="Harris J.D."/>
            <person name="Hibler D.W."/>
            <person name="Fontenot G.K."/>
            <person name="Hsu K.T."/>
            <person name="Yurewicz E.C."/>
            <person name="Sacco A.G."/>
        </authorList>
    </citation>
    <scope>NUCLEOTIDE SEQUENCE [MRNA]</scope>
    <source>
        <tissue>Ovary</tissue>
    </source>
</reference>
<reference key="2">
    <citation type="submission" date="1995-01" db="EMBL/GenBank/DDBJ databases">
        <authorList>
            <person name="Okazaki Y."/>
            <person name="Sugimoto M."/>
        </authorList>
    </citation>
    <scope>NUCLEOTIDE SEQUENCE [MRNA]</scope>
    <source>
        <tissue>Ovary</tissue>
    </source>
</reference>